<feature type="chain" id="PRO_0000076352" description="Mediator of RNA polymerase II transcription subunit 13-like">
    <location>
        <begin position="1"/>
        <end position="2210"/>
    </location>
</feature>
<feature type="region of interest" description="Disordered" evidence="1">
    <location>
        <begin position="391"/>
        <end position="414"/>
    </location>
</feature>
<feature type="region of interest" description="Disordered" evidence="1">
    <location>
        <begin position="435"/>
        <end position="489"/>
    </location>
</feature>
<feature type="region of interest" description="Disordered" evidence="1">
    <location>
        <begin position="519"/>
        <end position="582"/>
    </location>
</feature>
<feature type="region of interest" description="Disordered" evidence="1">
    <location>
        <begin position="736"/>
        <end position="770"/>
    </location>
</feature>
<feature type="region of interest" description="Disordered" evidence="1">
    <location>
        <begin position="1016"/>
        <end position="1096"/>
    </location>
</feature>
<feature type="region of interest" description="Leucine-zipper">
    <location>
        <begin position="1380"/>
        <end position="1401"/>
    </location>
</feature>
<feature type="region of interest" description="Disordered" evidence="1">
    <location>
        <begin position="1530"/>
        <end position="1656"/>
    </location>
</feature>
<feature type="region of interest" description="Disordered" evidence="1">
    <location>
        <begin position="2045"/>
        <end position="2080"/>
    </location>
</feature>
<feature type="short sequence motif" description="LXXLL motif 1">
    <location>
        <begin position="669"/>
        <end position="673"/>
    </location>
</feature>
<feature type="short sequence motif" description="LXXLL motif 2">
    <location>
        <begin position="1225"/>
        <end position="1229"/>
    </location>
</feature>
<feature type="compositionally biased region" description="Polar residues" evidence="1">
    <location>
        <begin position="391"/>
        <end position="400"/>
    </location>
</feature>
<feature type="compositionally biased region" description="Low complexity" evidence="1">
    <location>
        <begin position="445"/>
        <end position="458"/>
    </location>
</feature>
<feature type="compositionally biased region" description="Basic and acidic residues" evidence="1">
    <location>
        <begin position="468"/>
        <end position="480"/>
    </location>
</feature>
<feature type="compositionally biased region" description="Polar residues" evidence="1">
    <location>
        <begin position="533"/>
        <end position="544"/>
    </location>
</feature>
<feature type="compositionally biased region" description="Pro residues" evidence="1">
    <location>
        <begin position="551"/>
        <end position="560"/>
    </location>
</feature>
<feature type="compositionally biased region" description="Basic and acidic residues" evidence="1">
    <location>
        <begin position="736"/>
        <end position="752"/>
    </location>
</feature>
<feature type="compositionally biased region" description="Low complexity" evidence="1">
    <location>
        <begin position="1025"/>
        <end position="1036"/>
    </location>
</feature>
<feature type="compositionally biased region" description="Polar residues" evidence="1">
    <location>
        <begin position="1077"/>
        <end position="1092"/>
    </location>
</feature>
<feature type="compositionally biased region" description="Low complexity" evidence="1">
    <location>
        <begin position="1531"/>
        <end position="1608"/>
    </location>
</feature>
<feature type="compositionally biased region" description="Polar residues" evidence="1">
    <location>
        <begin position="1615"/>
        <end position="1629"/>
    </location>
</feature>
<feature type="compositionally biased region" description="Low complexity" evidence="1">
    <location>
        <begin position="1637"/>
        <end position="1650"/>
    </location>
</feature>
<feature type="modified residue" description="Phosphoserine" evidence="14">
    <location>
        <position position="553"/>
    </location>
</feature>
<feature type="modified residue" description="Phosphoserine" evidence="14">
    <location>
        <position position="560"/>
    </location>
</feature>
<feature type="modified residue" description="Phosphoserine" evidence="12 13 14">
    <location>
        <position position="817"/>
    </location>
</feature>
<feature type="modified residue" description="Phosphoserine" evidence="12">
    <location>
        <position position="826"/>
    </location>
</feature>
<feature type="modified residue" description="Phosphoserine" evidence="15">
    <location>
        <position position="923"/>
    </location>
</feature>
<feature type="modified residue" description="Phosphoserine" evidence="12 13 15">
    <location>
        <position position="2083"/>
    </location>
</feature>
<feature type="sequence variant" id="VAR_076332" description="In MRFACD." evidence="6">
    <location>
        <begin position="160"/>
        <end position="174"/>
    </location>
</feature>
<feature type="sequence variant" id="VAR_024024" description="In MRFACD; uncertain significance; dbSNP:rs28940309." evidence="2">
    <original>E</original>
    <variation>G</variation>
    <location>
        <position position="251"/>
    </location>
</feature>
<feature type="sequence variant" id="VAR_024025" description="In a patient with dextro-looped transposition of the great arteries; uncertain significance; dbSNP:rs28940310." evidence="2">
    <original>R</original>
    <variation>H</variation>
    <location>
        <position position="1872"/>
    </location>
</feature>
<feature type="sequence variant" id="VAR_024026" description="In a patient with dextro-looped transposition of the great arteries; uncertain significance; dbSNP:rs121918333." evidence="2">
    <original>D</original>
    <variation>G</variation>
    <location>
        <position position="2023"/>
    </location>
</feature>
<feature type="sequence conflict" description="In Ref. 5; BAA82977." evidence="11" ref="5">
    <original>PQSVA</original>
    <variation>SISLI</variation>
    <location>
        <begin position="295"/>
        <end position="299"/>
    </location>
</feature>
<feature type="sequence conflict" description="In Ref. 4; CAH18186." evidence="11" ref="4">
    <original>L</original>
    <variation>S</variation>
    <location>
        <position position="861"/>
    </location>
</feature>
<feature type="sequence conflict" description="In Ref. 4; CAH18186." evidence="11" ref="4">
    <original>S</original>
    <variation>G</variation>
    <location>
        <position position="1258"/>
    </location>
</feature>
<feature type="sequence conflict" description="In Ref. 7; BAB14697." evidence="11" ref="7">
    <original>P</original>
    <variation>L</variation>
    <location>
        <position position="1455"/>
    </location>
</feature>
<feature type="sequence conflict" description="In Ref. 7; BAB14697." evidence="11" ref="7">
    <original>S</original>
    <variation>N</variation>
    <location>
        <position position="1577"/>
    </location>
</feature>
<feature type="sequence conflict" description="In Ref. 7; BAB14697." evidence="11" ref="7">
    <original>L</original>
    <variation>M</variation>
    <location>
        <position position="1703"/>
    </location>
</feature>
<feature type="sequence conflict" description="In Ref. 7; BAB14697." evidence="11" ref="7">
    <original>V</original>
    <variation>F</variation>
    <location>
        <position position="1971"/>
    </location>
</feature>
<feature type="sequence conflict" description="In Ref. 7; BAB14697." evidence="11" ref="7">
    <original>V</original>
    <variation>A</variation>
    <location>
        <position position="2194"/>
    </location>
</feature>
<accession>Q71F56</accession>
<accession>A1L469</accession>
<accession>Q68DN4</accession>
<accession>Q9H8C0</accession>
<accession>Q9NSY9</accession>
<accession>Q9UFD8</accession>
<accession>Q9UPX5</accession>
<dbReference type="EMBL" id="AF515599">
    <property type="protein sequence ID" value="AAQ08182.1"/>
    <property type="molecule type" value="mRNA"/>
</dbReference>
<dbReference type="EMBL" id="AY338463">
    <property type="protein sequence ID" value="AAR08418.1"/>
    <property type="molecule type" value="mRNA"/>
</dbReference>
<dbReference type="EMBL" id="BC130422">
    <property type="protein sequence ID" value="AAI30423.1"/>
    <property type="molecule type" value="mRNA"/>
</dbReference>
<dbReference type="EMBL" id="AL133033">
    <property type="protein sequence ID" value="CAB61363.1"/>
    <property type="molecule type" value="mRNA"/>
</dbReference>
<dbReference type="EMBL" id="AL137644">
    <property type="protein sequence ID" value="CAB70855.1"/>
    <property type="molecule type" value="mRNA"/>
</dbReference>
<dbReference type="EMBL" id="CR749332">
    <property type="protein sequence ID" value="CAH18186.1"/>
    <property type="molecule type" value="mRNA"/>
</dbReference>
<dbReference type="EMBL" id="AB028948">
    <property type="protein sequence ID" value="BAA82977.2"/>
    <property type="molecule type" value="mRNA"/>
</dbReference>
<dbReference type="EMBL" id="AK023837">
    <property type="protein sequence ID" value="BAB14697.1"/>
    <property type="status" value="ALT_INIT"/>
    <property type="molecule type" value="mRNA"/>
</dbReference>
<dbReference type="CCDS" id="CCDS9177.1"/>
<dbReference type="PIR" id="T42707">
    <property type="entry name" value="T42707"/>
</dbReference>
<dbReference type="RefSeq" id="NP_056150.1">
    <property type="nucleotide sequence ID" value="NM_015335.5"/>
</dbReference>
<dbReference type="SMR" id="Q71F56"/>
<dbReference type="BioGRID" id="116964">
    <property type="interactions" value="76"/>
</dbReference>
<dbReference type="CORUM" id="Q71F56"/>
<dbReference type="FunCoup" id="Q71F56">
    <property type="interactions" value="2294"/>
</dbReference>
<dbReference type="IntAct" id="Q71F56">
    <property type="interactions" value="77"/>
</dbReference>
<dbReference type="MINT" id="Q71F56"/>
<dbReference type="STRING" id="9606.ENSP00000281928"/>
<dbReference type="GlyGen" id="Q71F56">
    <property type="glycosylation" value="3 sites, 1 O-linked glycan (1 site)"/>
</dbReference>
<dbReference type="iPTMnet" id="Q71F56"/>
<dbReference type="PhosphoSitePlus" id="Q71F56"/>
<dbReference type="BioMuta" id="MED13L"/>
<dbReference type="DMDM" id="74749769"/>
<dbReference type="jPOST" id="Q71F56"/>
<dbReference type="MassIVE" id="Q71F56"/>
<dbReference type="PaxDb" id="9606-ENSP00000281928"/>
<dbReference type="PeptideAtlas" id="Q71F56"/>
<dbReference type="ProteomicsDB" id="68600"/>
<dbReference type="Pumba" id="Q71F56"/>
<dbReference type="Antibodypedia" id="31301">
    <property type="antibodies" value="93 antibodies from 24 providers"/>
</dbReference>
<dbReference type="DNASU" id="23389"/>
<dbReference type="Ensembl" id="ENST00000281928.9">
    <property type="protein sequence ID" value="ENSP00000281928.3"/>
    <property type="gene ID" value="ENSG00000123066.9"/>
</dbReference>
<dbReference type="GeneID" id="23389"/>
<dbReference type="KEGG" id="hsa:23389"/>
<dbReference type="MANE-Select" id="ENST00000281928.9">
    <property type="protein sequence ID" value="ENSP00000281928.3"/>
    <property type="RefSeq nucleotide sequence ID" value="NM_015335.5"/>
    <property type="RefSeq protein sequence ID" value="NP_056150.1"/>
</dbReference>
<dbReference type="UCSC" id="uc001tvw.4">
    <property type="organism name" value="human"/>
</dbReference>
<dbReference type="AGR" id="HGNC:22962"/>
<dbReference type="CTD" id="23389"/>
<dbReference type="DisGeNET" id="23389"/>
<dbReference type="GeneCards" id="MED13L"/>
<dbReference type="HGNC" id="HGNC:22962">
    <property type="gene designation" value="MED13L"/>
</dbReference>
<dbReference type="HPA" id="ENSG00000123066">
    <property type="expression patterns" value="Low tissue specificity"/>
</dbReference>
<dbReference type="MalaCards" id="MED13L"/>
<dbReference type="MIM" id="608771">
    <property type="type" value="gene"/>
</dbReference>
<dbReference type="MIM" id="616789">
    <property type="type" value="phenotype"/>
</dbReference>
<dbReference type="neXtProt" id="NX_Q71F56"/>
<dbReference type="OpenTargets" id="ENSG00000123066"/>
<dbReference type="Orphanet" id="369891">
    <property type="disease" value="Developmental delay-facial dysmorphism syndrome due to MED13L deficiency"/>
</dbReference>
<dbReference type="Orphanet" id="216718">
    <property type="disease" value="Isolated congenitally uncorrected transposition of the great arteries"/>
</dbReference>
<dbReference type="PharmGKB" id="PA162395233"/>
<dbReference type="VEuPathDB" id="HostDB:ENSG00000123066"/>
<dbReference type="eggNOG" id="KOG3600">
    <property type="taxonomic scope" value="Eukaryota"/>
</dbReference>
<dbReference type="GeneTree" id="ENSGT00390000013680"/>
<dbReference type="HOGENOM" id="CLU_000508_0_0_1"/>
<dbReference type="InParanoid" id="Q71F56"/>
<dbReference type="OrthoDB" id="103819at2759"/>
<dbReference type="PAN-GO" id="Q71F56">
    <property type="GO annotations" value="3 GO annotations based on evolutionary models"/>
</dbReference>
<dbReference type="PhylomeDB" id="Q71F56"/>
<dbReference type="TreeFam" id="TF316867"/>
<dbReference type="PathwayCommons" id="Q71F56"/>
<dbReference type="Reactome" id="R-HSA-1989781">
    <property type="pathway name" value="PPARA activates gene expression"/>
</dbReference>
<dbReference type="Reactome" id="R-HSA-381340">
    <property type="pathway name" value="Transcriptional regulation of white adipocyte differentiation"/>
</dbReference>
<dbReference type="Reactome" id="R-HSA-9833110">
    <property type="pathway name" value="RSV-host interactions"/>
</dbReference>
<dbReference type="SignaLink" id="Q71F56"/>
<dbReference type="SIGNOR" id="Q71F56"/>
<dbReference type="BioGRID-ORCS" id="23389">
    <property type="hits" value="66 hits in 1170 CRISPR screens"/>
</dbReference>
<dbReference type="ChiTaRS" id="MED13L">
    <property type="organism name" value="human"/>
</dbReference>
<dbReference type="GenomeRNAi" id="23389"/>
<dbReference type="Pharos" id="Q71F56">
    <property type="development level" value="Tbio"/>
</dbReference>
<dbReference type="PRO" id="PR:Q71F56"/>
<dbReference type="Proteomes" id="UP000005640">
    <property type="component" value="Chromosome 12"/>
</dbReference>
<dbReference type="RNAct" id="Q71F56">
    <property type="molecule type" value="protein"/>
</dbReference>
<dbReference type="Bgee" id="ENSG00000123066">
    <property type="expression patterns" value="Expressed in calcaneal tendon and 212 other cell types or tissues"/>
</dbReference>
<dbReference type="ExpressionAtlas" id="Q71F56">
    <property type="expression patterns" value="baseline and differential"/>
</dbReference>
<dbReference type="GO" id="GO:0016592">
    <property type="term" value="C:mediator complex"/>
    <property type="evidence" value="ECO:0007669"/>
    <property type="project" value="InterPro"/>
</dbReference>
<dbReference type="GO" id="GO:0005654">
    <property type="term" value="C:nucleoplasm"/>
    <property type="evidence" value="ECO:0000304"/>
    <property type="project" value="Reactome"/>
</dbReference>
<dbReference type="GO" id="GO:0003713">
    <property type="term" value="F:transcription coactivator activity"/>
    <property type="evidence" value="ECO:0000314"/>
    <property type="project" value="GO_Central"/>
</dbReference>
<dbReference type="GO" id="GO:0045944">
    <property type="term" value="P:positive regulation of transcription by RNA polymerase II"/>
    <property type="evidence" value="ECO:0000314"/>
    <property type="project" value="GO_Central"/>
</dbReference>
<dbReference type="InterPro" id="IPR009401">
    <property type="entry name" value="Med13_C"/>
</dbReference>
<dbReference type="InterPro" id="IPR051139">
    <property type="entry name" value="Mediator_complx_sub13"/>
</dbReference>
<dbReference type="InterPro" id="IPR021643">
    <property type="entry name" value="Mediator_Med13_N"/>
</dbReference>
<dbReference type="InterPro" id="IPR041285">
    <property type="entry name" value="MID_MedPIWI"/>
</dbReference>
<dbReference type="PANTHER" id="PTHR48249">
    <property type="entry name" value="MEDIATOR OF RNA POLYMERASE II TRANSCRIPTION SUBUNIT 13"/>
    <property type="match status" value="1"/>
</dbReference>
<dbReference type="PANTHER" id="PTHR48249:SF1">
    <property type="entry name" value="MEDIATOR OF RNA POLYMERASE II TRANSCRIPTION SUBUNIT 13-LIKE"/>
    <property type="match status" value="1"/>
</dbReference>
<dbReference type="Pfam" id="PF06333">
    <property type="entry name" value="Med13_C"/>
    <property type="match status" value="1"/>
</dbReference>
<dbReference type="Pfam" id="PF11597">
    <property type="entry name" value="Med13_N"/>
    <property type="match status" value="1"/>
</dbReference>
<dbReference type="Pfam" id="PF18296">
    <property type="entry name" value="MID_MedPIWI"/>
    <property type="match status" value="1"/>
</dbReference>
<evidence type="ECO:0000256" key="1">
    <source>
        <dbReference type="SAM" id="MobiDB-lite"/>
    </source>
</evidence>
<evidence type="ECO:0000269" key="2">
    <source>
    </source>
</evidence>
<evidence type="ECO:0000269" key="3">
    <source>
    </source>
</evidence>
<evidence type="ECO:0000269" key="4">
    <source>
    </source>
</evidence>
<evidence type="ECO:0000269" key="5">
    <source>
    </source>
</evidence>
<evidence type="ECO:0000269" key="6">
    <source>
    </source>
</evidence>
<evidence type="ECO:0000269" key="7">
    <source>
    </source>
</evidence>
<evidence type="ECO:0000269" key="8">
    <source>
    </source>
</evidence>
<evidence type="ECO:0000269" key="9">
    <source>
    </source>
</evidence>
<evidence type="ECO:0000269" key="10">
    <source>
    </source>
</evidence>
<evidence type="ECO:0000305" key="11"/>
<evidence type="ECO:0007744" key="12">
    <source>
    </source>
</evidence>
<evidence type="ECO:0007744" key="13">
    <source>
    </source>
</evidence>
<evidence type="ECO:0007744" key="14">
    <source>
    </source>
</evidence>
<evidence type="ECO:0007744" key="15">
    <source>
    </source>
</evidence>
<name>MD13L_HUMAN</name>
<proteinExistence type="evidence at protein level"/>
<sequence>MTAAANWVANGASLEDCHSNLFSLAELTGIKWRRYNFGGHGDCGPIISAPAQDDPILLSFIRCLQANLLCVWRRDVKPDCKELWIFWWGDEPNLVGVIHHELQVVEEGLWENGLSYECRTLLFKAIHNLLERCLMDKNFVRIGKWFVRPYEKDEKPVNKSEHLSCAFTFFLHGESNVCTSVEIAQHQPIYLINEEHIHMAQSSPAPFQVLVSPYGLNGTLTGQAYKMSDPATRKLIEEWQYFYPMVLKKKEESKEEDELGYDDDFPVAVEVIVGGVRMVYPSAFVLISQNDIPVPQSVASAGGHIAVGQQGLGSVKDPSNCGMPLTPPTSPEQAILGESGGMQSAASHLVSQDGGMITMHSPKRSGKIPPKLHNHMVHRVWKECILNRTQSKRSQMSTPTLEEEPASNPATWDFVDPTQRVSCSCSRHKLLKRCAVGPNRPPTVSQPGFSAGPSSSSSLPPPASSKHKTAERQEKGDKLQKRPLIPFHHRPSVAEELCMEQDTPGQKLGLAGIDSSLEVSSSRKYDKQMAVPSRNTSKQMNLNPMDSPHSPISPLPPTLSPQPRGQETESLDPPSVPVNPALYGNGLELQQLSTLDDRTVLVGQRLPLMAEVSETALYCGIRPSNPESSEKWWHSYRLPPSDDAEFRPPELQGERCDAKMEVNSESTALQRLLAQPNKRFKIWQDKQPQLQPLHFLDPLPLSQQPGDSLGEVNDPYTFEDGDIKYIFTANKKCKQGTEKDSLKKNKSEDGFGTKDVTTPGHSTPVPDGKNAMSIFSSATKTDVRQDNAAGRAGSSSLTQVTDLAPSLHDLDNIFDNSDDDELGAVSPALRSSKMPAVGTEDRPLGKDGRAAVPYPPTVADLQRMFPTPPSLEQHPAFSPVMNYKDGISSETVTALGMMESPMVSMVSTQLTEFKMEVEDGLGSPKPEEIKDFSYVHKVPSFQPFVGSSMFAPLKMLPSHCLLPLKIPDACLFRPSWAIPPKIEQLPMPPAATFIRDGYNNVPSVGSLADPDYLNTPQMNTPVTLNSAAPASNSGAGVLPSPATPRFSVPTPRTPRTPRTPRGGGTASGQGSVKYDSTDQGSPASTPSTTRPLNSVEPATMQPIPEAHSLYVTLILSDSVMNIFKDRNFDSCCICACNMNIKGADVGLYIPDSSNEDQYRCTCGFSAIMNRKLGYNSGLFLEDELDIFGKNSDIGQAAERRLMMCQSTFLPQVEGTKKPQEPPISLLLLLQNQHTQPFASLNFLDYISSNNRQTLPCVSWSYDRVQADNNDYWTECFNALEQGRQYVDNPTGGKVDEALVRSATVHSWPHSNVLDISMLSSQDVVRMLLSLQPFLQDAIQKKRTGRTWENIQHVQGPLTWQQFHKMAGRGTYGSEESPEPLPIPTLLVGYDKDFLTISPFSLPFWERLLLDPYGGHRDVAYIVVCPENEALLEGAKTFFRDLSAVYEMCRLGQHKPICKVLRDGIMRVGKTVAQKLTDELVSEWFNQPWSGEENDNHSRLKLYAQVCRHHLAPYLATLQLDSSLLIPPKYQTPPAAAQGQATPGNAGPLAPNGSAAPPAGSAFNPTSNSSSTNPAASSSASGSSVPPVSSSASAPGISQISTTSSSGFSGSVGGQNPSTGGISADRTQGNIGCGGDTDPGQSSSQPSQDGQESVTERERIGIPTEPDSADSHAHPPAVVIYMVDPFTYAAEEDSTSGNFWLLSLMRCYTEMLDNLPEHMRNSFILQIVPCQYMLQTMKDEQVFYIQYLKSMAFSVYCQCRRPLPTQIHIKSLTGFGPAASIEMTLKNPERPSPIQLYSPPFILAPIKDKQTELGETFGEASQKYNVLFVGYCLSHDQRWLLASCTDLHGELLETCVVNIALPNRSRRSKVSARKIGLQKLWEWCIGIVQMTSLPWRVVIGRLGRLGHGELKDWSILLGECSLQTISKKLKDVCRMCGISAADSPSILSACLVAMEPQGSFVVMPDAVTMGSVFGRSTALNMQSSQLNTPQDASCTHILVFPTSSTIQVAPANYPNEDGFSPNNDDMFVDLPFPDDMDNDIGILMTGNLHSSPNSSPVPSPGSPSGIGVGSHFQHSRSQGERLLSREAPEELKQQPLALGYFVSTAKAENLPQWFWSSCPQAQNQCPLFLKASLHHHISVAQTDELLPARNSQRVPHPLDSKTTSDVLRFVLEQYNALSWLTCNPATQDRTSCLPVHFVVLTQLYNAIMNIL</sequence>
<keyword id="KW-0010">Activator</keyword>
<keyword id="KW-0160">Chromosomal rearrangement</keyword>
<keyword id="KW-0225">Disease variant</keyword>
<keyword id="KW-0991">Intellectual disability</keyword>
<keyword id="KW-0539">Nucleus</keyword>
<keyword id="KW-0597">Phosphoprotein</keyword>
<keyword id="KW-1267">Proteomics identification</keyword>
<keyword id="KW-1185">Reference proteome</keyword>
<keyword id="KW-0677">Repeat</keyword>
<keyword id="KW-0678">Repressor</keyword>
<keyword id="KW-0804">Transcription</keyword>
<keyword id="KW-0805">Transcription regulation</keyword>
<protein>
    <recommendedName>
        <fullName>Mediator of RNA polymerase II transcription subunit 13-like</fullName>
    </recommendedName>
    <alternativeName>
        <fullName>Mediator complex subunit 13-like</fullName>
    </alternativeName>
    <alternativeName>
        <fullName>Thyroid hormone receptor-associated protein 2</fullName>
    </alternativeName>
    <alternativeName>
        <fullName>Thyroid hormone receptor-associated protein complex 240 kDa component-like</fullName>
    </alternativeName>
</protein>
<reference key="1">
    <citation type="journal article" date="2003" name="Circulation">
        <title>Missense mutations and gene interruption in PROSIT240, a novel TRAP240-like gene, in patients with congenital heart defect (transposition of the great arteries).</title>
        <authorList>
            <person name="Muncke N."/>
            <person name="Jung C."/>
            <person name="Ruediger H."/>
            <person name="Ulmer H."/>
            <person name="Roeth R."/>
            <person name="Hubert A."/>
            <person name="Goldmuntz E."/>
            <person name="Driscoll D."/>
            <person name="Goodship J."/>
            <person name="Schoen K."/>
            <person name="Rappold G."/>
        </authorList>
    </citation>
    <scope>NUCLEOTIDE SEQUENCE [MRNA]</scope>
    <scope>TISSUE SPECIFICITY</scope>
    <scope>VARIANT MRFACD GLY-251</scope>
    <scope>VARIANTS HIS-1872 AND GLY-2023</scope>
    <scope>CHROMOSOMAL TRANSLOCATION</scope>
</reference>
<reference key="2">
    <citation type="journal article" date="2004" name="Gene">
        <title>cDNA cloning and characterization of the human THRAP2 gene which maps to chromosome 12q24, and its mouse ortholog Thrap2.</title>
        <authorList>
            <person name="Musante L."/>
            <person name="Bartsch O."/>
            <person name="Ropers H.-H."/>
            <person name="Kalscheuer V.M."/>
        </authorList>
    </citation>
    <scope>NUCLEOTIDE SEQUENCE [MRNA]</scope>
    <scope>TISSUE SPECIFICITY</scope>
</reference>
<reference key="3">
    <citation type="journal article" date="2004" name="Genome Res.">
        <title>The status, quality, and expansion of the NIH full-length cDNA project: the Mammalian Gene Collection (MGC).</title>
        <authorList>
            <consortium name="The MGC Project Team"/>
        </authorList>
    </citation>
    <scope>NUCLEOTIDE SEQUENCE [LARGE SCALE MRNA]</scope>
    <source>
        <tissue>Cerebellum</tissue>
    </source>
</reference>
<reference key="4">
    <citation type="journal article" date="2007" name="BMC Genomics">
        <title>The full-ORF clone resource of the German cDNA consortium.</title>
        <authorList>
            <person name="Bechtel S."/>
            <person name="Rosenfelder H."/>
            <person name="Duda A."/>
            <person name="Schmidt C.P."/>
            <person name="Ernst U."/>
            <person name="Wellenreuther R."/>
            <person name="Mehrle A."/>
            <person name="Schuster C."/>
            <person name="Bahr A."/>
            <person name="Bloecker H."/>
            <person name="Heubner D."/>
            <person name="Hoerlein A."/>
            <person name="Michel G."/>
            <person name="Wedler H."/>
            <person name="Koehrer K."/>
            <person name="Ottenwaelder B."/>
            <person name="Poustka A."/>
            <person name="Wiemann S."/>
            <person name="Schupp I."/>
        </authorList>
    </citation>
    <scope>NUCLEOTIDE SEQUENCE [LARGE SCALE MRNA] OF 142-2210</scope>
    <source>
        <tissue>Fetal kidney</tissue>
    </source>
</reference>
<reference key="5">
    <citation type="journal article" date="1999" name="DNA Res.">
        <title>Prediction of the coding sequences of unidentified human genes. XIV. The complete sequences of 100 new cDNA clones from brain which code for large proteins in vitro.</title>
        <authorList>
            <person name="Kikuno R."/>
            <person name="Nagase T."/>
            <person name="Ishikawa K."/>
            <person name="Hirosawa M."/>
            <person name="Miyajima N."/>
            <person name="Tanaka A."/>
            <person name="Kotani H."/>
            <person name="Nomura N."/>
            <person name="Ohara O."/>
        </authorList>
    </citation>
    <scope>NUCLEOTIDE SEQUENCE [LARGE SCALE MRNA] OF 294-2210</scope>
    <source>
        <tissue>Brain</tissue>
    </source>
</reference>
<reference key="6">
    <citation type="journal article" date="2002" name="DNA Res.">
        <title>Construction of expression-ready cDNA clones for KIAA genes: manual curation of 330 KIAA cDNA clones.</title>
        <authorList>
            <person name="Nakajima D."/>
            <person name="Okazaki N."/>
            <person name="Yamakawa H."/>
            <person name="Kikuno R."/>
            <person name="Ohara O."/>
            <person name="Nagase T."/>
        </authorList>
    </citation>
    <scope>SEQUENCE REVISION</scope>
</reference>
<reference key="7">
    <citation type="journal article" date="2004" name="Nat. Genet.">
        <title>Complete sequencing and characterization of 21,243 full-length human cDNAs.</title>
        <authorList>
            <person name="Ota T."/>
            <person name="Suzuki Y."/>
            <person name="Nishikawa T."/>
            <person name="Otsuki T."/>
            <person name="Sugiyama T."/>
            <person name="Irie R."/>
            <person name="Wakamatsu A."/>
            <person name="Hayashi K."/>
            <person name="Sato H."/>
            <person name="Nagai K."/>
            <person name="Kimura K."/>
            <person name="Makita H."/>
            <person name="Sekine M."/>
            <person name="Obayashi M."/>
            <person name="Nishi T."/>
            <person name="Shibahara T."/>
            <person name="Tanaka T."/>
            <person name="Ishii S."/>
            <person name="Yamamoto J."/>
            <person name="Saito K."/>
            <person name="Kawai Y."/>
            <person name="Isono Y."/>
            <person name="Nakamura Y."/>
            <person name="Nagahari K."/>
            <person name="Murakami K."/>
            <person name="Yasuda T."/>
            <person name="Iwayanagi T."/>
            <person name="Wagatsuma M."/>
            <person name="Shiratori A."/>
            <person name="Sudo H."/>
            <person name="Hosoiri T."/>
            <person name="Kaku Y."/>
            <person name="Kodaira H."/>
            <person name="Kondo H."/>
            <person name="Sugawara M."/>
            <person name="Takahashi M."/>
            <person name="Kanda K."/>
            <person name="Yokoi T."/>
            <person name="Furuya T."/>
            <person name="Kikkawa E."/>
            <person name="Omura Y."/>
            <person name="Abe K."/>
            <person name="Kamihara K."/>
            <person name="Katsuta N."/>
            <person name="Sato K."/>
            <person name="Tanikawa M."/>
            <person name="Yamazaki M."/>
            <person name="Ninomiya K."/>
            <person name="Ishibashi T."/>
            <person name="Yamashita H."/>
            <person name="Murakawa K."/>
            <person name="Fujimori K."/>
            <person name="Tanai H."/>
            <person name="Kimata M."/>
            <person name="Watanabe M."/>
            <person name="Hiraoka S."/>
            <person name="Chiba Y."/>
            <person name="Ishida S."/>
            <person name="Ono Y."/>
            <person name="Takiguchi S."/>
            <person name="Watanabe S."/>
            <person name="Yosida M."/>
            <person name="Hotuta T."/>
            <person name="Kusano J."/>
            <person name="Kanehori K."/>
            <person name="Takahashi-Fujii A."/>
            <person name="Hara H."/>
            <person name="Tanase T.-O."/>
            <person name="Nomura Y."/>
            <person name="Togiya S."/>
            <person name="Komai F."/>
            <person name="Hara R."/>
            <person name="Takeuchi K."/>
            <person name="Arita M."/>
            <person name="Imose N."/>
            <person name="Musashino K."/>
            <person name="Yuuki H."/>
            <person name="Oshima A."/>
            <person name="Sasaki N."/>
            <person name="Aotsuka S."/>
            <person name="Yoshikawa Y."/>
            <person name="Matsunawa H."/>
            <person name="Ichihara T."/>
            <person name="Shiohata N."/>
            <person name="Sano S."/>
            <person name="Moriya S."/>
            <person name="Momiyama H."/>
            <person name="Satoh N."/>
            <person name="Takami S."/>
            <person name="Terashima Y."/>
            <person name="Suzuki O."/>
            <person name="Nakagawa S."/>
            <person name="Senoh A."/>
            <person name="Mizoguchi H."/>
            <person name="Goto Y."/>
            <person name="Shimizu F."/>
            <person name="Wakebe H."/>
            <person name="Hishigaki H."/>
            <person name="Watanabe T."/>
            <person name="Sugiyama A."/>
            <person name="Takemoto M."/>
            <person name="Kawakami B."/>
            <person name="Yamazaki M."/>
            <person name="Watanabe K."/>
            <person name="Kumagai A."/>
            <person name="Itakura S."/>
            <person name="Fukuzumi Y."/>
            <person name="Fujimori Y."/>
            <person name="Komiyama M."/>
            <person name="Tashiro H."/>
            <person name="Tanigami A."/>
            <person name="Fujiwara T."/>
            <person name="Ono T."/>
            <person name="Yamada K."/>
            <person name="Fujii Y."/>
            <person name="Ozaki K."/>
            <person name="Hirao M."/>
            <person name="Ohmori Y."/>
            <person name="Kawabata A."/>
            <person name="Hikiji T."/>
            <person name="Kobatake N."/>
            <person name="Inagaki H."/>
            <person name="Ikema Y."/>
            <person name="Okamoto S."/>
            <person name="Okitani R."/>
            <person name="Kawakami T."/>
            <person name="Noguchi S."/>
            <person name="Itoh T."/>
            <person name="Shigeta K."/>
            <person name="Senba T."/>
            <person name="Matsumura K."/>
            <person name="Nakajima Y."/>
            <person name="Mizuno T."/>
            <person name="Morinaga M."/>
            <person name="Sasaki M."/>
            <person name="Togashi T."/>
            <person name="Oyama M."/>
            <person name="Hata H."/>
            <person name="Watanabe M."/>
            <person name="Komatsu T."/>
            <person name="Mizushima-Sugano J."/>
            <person name="Satoh T."/>
            <person name="Shirai Y."/>
            <person name="Takahashi Y."/>
            <person name="Nakagawa K."/>
            <person name="Okumura K."/>
            <person name="Nagase T."/>
            <person name="Nomura N."/>
            <person name="Kikuchi H."/>
            <person name="Masuho Y."/>
            <person name="Yamashita R."/>
            <person name="Nakai K."/>
            <person name="Yada T."/>
            <person name="Nakamura Y."/>
            <person name="Ohara O."/>
            <person name="Isogai T."/>
            <person name="Sugano S."/>
        </authorList>
    </citation>
    <scope>NUCLEOTIDE SEQUENCE [LARGE SCALE MRNA] OF 1077-2210</scope>
    <source>
        <tissue>Placenta</tissue>
    </source>
</reference>
<reference key="8">
    <citation type="journal article" date="2004" name="Mol. Cell">
        <title>A set of consensus mammalian mediator subunits identified by multidimensional protein identification technology.</title>
        <authorList>
            <person name="Sato S."/>
            <person name="Tomomori-Sato C."/>
            <person name="Parmely T.J."/>
            <person name="Florens L."/>
            <person name="Zybailov B."/>
            <person name="Swanson S.K."/>
            <person name="Banks C.A.S."/>
            <person name="Jin J."/>
            <person name="Cai Y."/>
            <person name="Washburn M.P."/>
            <person name="Conaway J.W."/>
            <person name="Conaway R.C."/>
        </authorList>
    </citation>
    <scope>IDENTIFICATION BY MASS SPECTROMETRY</scope>
    <scope>IDENTIFICATION IN THE MEDIATOR COMPLEX</scope>
</reference>
<reference key="9">
    <citation type="journal article" date="2005" name="Mol. Cell">
        <title>MED1/TRAP220 exists predominantly in a TRAP/Mediator subpopulation enriched in RNA polymerase II and is required for ER-mediated transcription.</title>
        <authorList>
            <person name="Zhang X."/>
            <person name="Krutchinsky A."/>
            <person name="Fukuda A."/>
            <person name="Chen W."/>
            <person name="Yamamura S."/>
            <person name="Chait B.T."/>
            <person name="Roeder R.G."/>
        </authorList>
    </citation>
    <scope>IDENTIFICATION BY MASS SPECTROMETRY</scope>
    <scope>IDENTIFICATION IN THE MEDIATOR COMPLEX</scope>
</reference>
<reference key="10">
    <citation type="journal article" date="2008" name="Mol. Cell">
        <title>Kinase-selective enrichment enables quantitative phosphoproteomics of the kinome across the cell cycle.</title>
        <authorList>
            <person name="Daub H."/>
            <person name="Olsen J.V."/>
            <person name="Bairlein M."/>
            <person name="Gnad F."/>
            <person name="Oppermann F.S."/>
            <person name="Korner R."/>
            <person name="Greff Z."/>
            <person name="Keri G."/>
            <person name="Stemmann O."/>
            <person name="Mann M."/>
        </authorList>
    </citation>
    <scope>PHOSPHORYLATION [LARGE SCALE ANALYSIS] AT SER-817; SER-826 AND SER-2083</scope>
    <scope>IDENTIFICATION BY MASS SPECTROMETRY [LARGE SCALE ANALYSIS]</scope>
    <source>
        <tissue>Cervix carcinoma</tissue>
    </source>
</reference>
<reference key="11">
    <citation type="journal article" date="2009" name="Mol. Cell. Proteomics">
        <title>Large-scale proteomics analysis of the human kinome.</title>
        <authorList>
            <person name="Oppermann F.S."/>
            <person name="Gnad F."/>
            <person name="Olsen J.V."/>
            <person name="Hornberger R."/>
            <person name="Greff Z."/>
            <person name="Keri G."/>
            <person name="Mann M."/>
            <person name="Daub H."/>
        </authorList>
    </citation>
    <scope>PHOSPHORYLATION [LARGE SCALE ANALYSIS] AT SER-817 AND SER-2083</scope>
    <scope>IDENTIFICATION BY MASS SPECTROMETRY [LARGE SCALE ANALYSIS]</scope>
</reference>
<reference key="12">
    <citation type="journal article" date="2009" name="Sci. Signal.">
        <title>Quantitative phosphoproteomic analysis of T cell receptor signaling reveals system-wide modulation of protein-protein interactions.</title>
        <authorList>
            <person name="Mayya V."/>
            <person name="Lundgren D.H."/>
            <person name="Hwang S.-I."/>
            <person name="Rezaul K."/>
            <person name="Wu L."/>
            <person name="Eng J.K."/>
            <person name="Rodionov V."/>
            <person name="Han D.K."/>
        </authorList>
    </citation>
    <scope>PHOSPHORYLATION [LARGE SCALE ANALYSIS] AT SER-553; SER-560 AND SER-817</scope>
    <scope>IDENTIFICATION BY MASS SPECTROMETRY [LARGE SCALE ANALYSIS]</scope>
    <source>
        <tissue>Leukemic T-cell</tissue>
    </source>
</reference>
<reference key="13">
    <citation type="journal article" date="2013" name="J. Proteome Res.">
        <title>Toward a comprehensive characterization of a human cancer cell phosphoproteome.</title>
        <authorList>
            <person name="Zhou H."/>
            <person name="Di Palma S."/>
            <person name="Preisinger C."/>
            <person name="Peng M."/>
            <person name="Polat A.N."/>
            <person name="Heck A.J."/>
            <person name="Mohammed S."/>
        </authorList>
    </citation>
    <scope>PHOSPHORYLATION [LARGE SCALE ANALYSIS] AT SER-923 AND SER-2083</scope>
    <scope>IDENTIFICATION BY MASS SPECTROMETRY [LARGE SCALE ANALYSIS]</scope>
    <source>
        <tissue>Cervix carcinoma</tissue>
        <tissue>Erythroleukemia</tissue>
    </source>
</reference>
<reference key="14">
    <citation type="journal article" date="2014" name="J. Med. Genet.">
        <title>Efficient strategy for the molecular diagnosis of intellectual disability using targeted high-throughput sequencing.</title>
        <authorList>
            <person name="Redin C."/>
            <person name="Gerard B."/>
            <person name="Lauer J."/>
            <person name="Herenger Y."/>
            <person name="Muller J."/>
            <person name="Quartier A."/>
            <person name="Masurel-Paulet A."/>
            <person name="Willems M."/>
            <person name="Lesca G."/>
            <person name="El-Chehadeh S."/>
            <person name="Le Gras S."/>
            <person name="Vicaire S."/>
            <person name="Philipps M."/>
            <person name="Dumas M."/>
            <person name="Geoffroy V."/>
            <person name="Feger C."/>
            <person name="Haumesser N."/>
            <person name="Alembik Y."/>
            <person name="Barth M."/>
            <person name="Bonneau D."/>
            <person name="Colin E."/>
            <person name="Dollfus H."/>
            <person name="Doray B."/>
            <person name="Delrue M.A."/>
            <person name="Drouin-Garraud V."/>
            <person name="Flori E."/>
            <person name="Fradin M."/>
            <person name="Francannet C."/>
            <person name="Goldenberg A."/>
            <person name="Lumbroso S."/>
            <person name="Mathieu-Dramard M."/>
            <person name="Martin-Coignard D."/>
            <person name="Lacombe D."/>
            <person name="Morin G."/>
            <person name="Polge A."/>
            <person name="Sukno S."/>
            <person name="Thauvin-Robinet C."/>
            <person name="Thevenon J."/>
            <person name="Doco-Fenzy M."/>
            <person name="Genevieve D."/>
            <person name="Sarda P."/>
            <person name="Edery P."/>
            <person name="Isidor B."/>
            <person name="Jost B."/>
            <person name="Olivier-Faivre L."/>
            <person name="Mandel J.L."/>
            <person name="Piton A."/>
        </authorList>
    </citation>
    <scope>INVOLVEMENT IN MRFACD</scope>
</reference>
<reference key="15">
    <citation type="journal article" date="2014" name="PLoS Genet.">
        <title>De novo mutations in moderate or severe intellectual disability.</title>
        <authorList>
            <person name="Hamdan F.F."/>
            <person name="Srour M."/>
            <person name="Capo-Chichi J.M."/>
            <person name="Daoud H."/>
            <person name="Nassif C."/>
            <person name="Patry L."/>
            <person name="Massicotte C."/>
            <person name="Ambalavanan A."/>
            <person name="Spiegelman D."/>
            <person name="Diallo O."/>
            <person name="Henrion E."/>
            <person name="Dionne-Laporte A."/>
            <person name="Fougerat A."/>
            <person name="Pshezhetsky A.V."/>
            <person name="Venkateswaran S."/>
            <person name="Rouleau G.A."/>
            <person name="Michaud J.L."/>
        </authorList>
    </citation>
    <scope>INVOLVEMENT IN MRFACD</scope>
</reference>
<reference key="16">
    <citation type="journal article" date="2015" name="Eur. J. Hum. Genet.">
        <title>Further confirmation of the MED13L haploinsufficiency syndrome.</title>
        <authorList>
            <person name="van Haelst M.M."/>
            <person name="Monroe G.R."/>
            <person name="Duran K."/>
            <person name="van Binsbergen E."/>
            <person name="Breur J.M."/>
            <person name="Giltay J.C."/>
            <person name="van Haaften G."/>
        </authorList>
    </citation>
    <scope>VARIANT MRFACD 160-SER--GLU-174 DEL</scope>
</reference>
<reference key="17">
    <citation type="journal article" date="2015" name="Eur. J. Hum. Genet.">
        <title>Redefining the MED13L syndrome.</title>
        <authorList>
            <person name="Adegbola A."/>
            <person name="Musante L."/>
            <person name="Callewaert B."/>
            <person name="Maciel P."/>
            <person name="Hu H."/>
            <person name="Isidor B."/>
            <person name="Picker-Minh S."/>
            <person name="Le Caignec C."/>
            <person name="Delle Chiaie B."/>
            <person name="Vanakker O."/>
            <person name="Menten B."/>
            <person name="Dheedene A."/>
            <person name="Bockaert N."/>
            <person name="Roelens F."/>
            <person name="Decaestecker K."/>
            <person name="Silva J."/>
            <person name="Soares G."/>
            <person name="Lopes F."/>
            <person name="Najmabadi H."/>
            <person name="Kahrizi K."/>
            <person name="Cox G.F."/>
            <person name="Angus S.P."/>
            <person name="Staropoli J.F."/>
            <person name="Fischer U."/>
            <person name="Suckow V."/>
            <person name="Bartsch O."/>
            <person name="Chess A."/>
            <person name="Ropers H.H."/>
            <person name="Wienker T.F."/>
            <person name="Huebner C."/>
            <person name="Kaindl A.M."/>
            <person name="Kalscheuer V.M."/>
        </authorList>
    </citation>
    <scope>INVOLVEMENT IN MRFACD</scope>
</reference>
<reference key="18">
    <citation type="journal article" date="2015" name="Eur. J. Hum. Genet.">
        <title>Novel de novo heterozygous loss-of-function variants in MED13L and further delineation of the MED13L haploinsufficiency syndrome.</title>
        <authorList>
            <person name="Cafiero C."/>
            <person name="Marangi G."/>
            <person name="Orteschi D."/>
            <person name="Ali M."/>
            <person name="Asaro A."/>
            <person name="Ponzi E."/>
            <person name="Moncada A."/>
            <person name="Ricciardi S."/>
            <person name="Murdolo M."/>
            <person name="Mancano G."/>
            <person name="Contaldo I."/>
            <person name="Leuzzi V."/>
            <person name="Battaglia D."/>
            <person name="Mercuri E."/>
            <person name="Slavotinek A.M."/>
            <person name="Zollino M."/>
        </authorList>
    </citation>
    <scope>INVOLVEMENT IN MRFACD</scope>
</reference>
<gene>
    <name type="primary">MED13L</name>
    <name type="synonym">KIAA1025</name>
    <name type="synonym">PROSIT240</name>
    <name type="synonym">THRAP2</name>
    <name type="synonym">TRAP240L</name>
</gene>
<organism>
    <name type="scientific">Homo sapiens</name>
    <name type="common">Human</name>
    <dbReference type="NCBI Taxonomy" id="9606"/>
    <lineage>
        <taxon>Eukaryota</taxon>
        <taxon>Metazoa</taxon>
        <taxon>Chordata</taxon>
        <taxon>Craniata</taxon>
        <taxon>Vertebrata</taxon>
        <taxon>Euteleostomi</taxon>
        <taxon>Mammalia</taxon>
        <taxon>Eutheria</taxon>
        <taxon>Euarchontoglires</taxon>
        <taxon>Primates</taxon>
        <taxon>Haplorrhini</taxon>
        <taxon>Catarrhini</taxon>
        <taxon>Hominidae</taxon>
        <taxon>Homo</taxon>
    </lineage>
</organism>
<comment type="function">
    <text>Component of the Mediator complex, a coactivator involved in the regulated transcription of nearly all RNA polymerase II-dependent genes. Mediator functions as a bridge to convey information from gene-specific regulatory proteins to the basal RNA polymerase II transcription machinery. Mediator is recruited to promoters by direct interactions with regulatory proteins and serves as a scaffold for the assembly of a functional preinitiation complex with RNA polymerase II and the general transcription factors. This subunit may specifically regulate transcription of targets of the Wnt signaling pathway and SHH signaling pathway.</text>
</comment>
<comment type="subunit">
    <text evidence="4 5">Component of the Mediator complex, which is composed of MED1, MED4, MED6, MED7, MED8, MED9, MED10, MED11, MED12, MED13, MED13L, MED14, MED15, MED16, MED17, MED18, MED19, MED20, MED21, MED22, MED23, MED24, MED25, MED26, MED27, MED29, MED30, MED31, CCNC, CDK8 and CDC2L6/CDK11. The MED12, MED13, CCNC and CDK8 subunits form a distinct module termed the CDK8 module. Mediator containing the CDK8 module is less active than Mediator lacking this module in supporting transcriptional activation. Individual preparations of the Mediator complex lacking one or more distinct subunits have been variously termed ARC, CRSP, DRIP, PC2, SMCC and TRAP.</text>
</comment>
<comment type="subcellular location">
    <subcellularLocation>
        <location evidence="11">Nucleus</location>
    </subcellularLocation>
</comment>
<comment type="tissue specificity">
    <text evidence="2 3">Highly expressed in brain (cerebellum), heart (aorta), skeletal muscle, kidney, placenta and peripheral blood leukocytes. Highly expressed in fetal brain.</text>
</comment>
<comment type="disease">
    <text evidence="2">A chromosomal aberration involving MED13L is found in a patient with transposition of the great arteries, dextro-looped and intellectual disability. Translocation t(12;17)(q24.1;q21).</text>
</comment>
<comment type="disease" evidence="2 6 7 8 9 10">
    <disease id="DI-04642">
        <name>Impaired intellectual development and distinctive facial features with or without cardiac defects</name>
        <acronym>MRFACD</acronym>
        <description>An autosomal dominant syndrome characterized by intellectual disability, delayed psychomotor development, profound language impairment, and facial dysmorphism, including frontal bossing, upslanting palpebral fissures, depressed nasal bridge with bulbous tip, and macrostomia. There is variable penetrance of cardiac malformations, ranging from no malformations to patent foramen ovale to septal defects and/or transposition of the great arteries.</description>
        <dbReference type="MIM" id="616789"/>
    </disease>
    <text>The disease is caused by variants affecting the gene represented in this entry.</text>
</comment>
<comment type="similarity">
    <text evidence="11">Belongs to the Mediator complex subunit 13 family.</text>
</comment>
<comment type="sequence caution" evidence="11">
    <conflict type="erroneous initiation">
        <sequence resource="EMBL-CDS" id="BAB14697"/>
    </conflict>
</comment>